<proteinExistence type="predicted"/>
<gene>
    <name type="primary">nedR</name>
</gene>
<protein>
    <recommendedName>
        <fullName>Putative transcriptional regulatory protein NedR</fullName>
    </recommendedName>
</protein>
<organism>
    <name type="scientific">Micromonospora viridifaciens</name>
    <dbReference type="NCBI Taxonomy" id="1881"/>
    <lineage>
        <taxon>Bacteria</taxon>
        <taxon>Bacillati</taxon>
        <taxon>Actinomycetota</taxon>
        <taxon>Actinomycetes</taxon>
        <taxon>Micromonosporales</taxon>
        <taxon>Micromonosporaceae</taxon>
        <taxon>Micromonospora</taxon>
    </lineage>
</organism>
<evidence type="ECO:0000256" key="1">
    <source>
        <dbReference type="SAM" id="MobiDB-lite"/>
    </source>
</evidence>
<comment type="function">
    <text>May serve as a transcriptional regulator.</text>
</comment>
<reference key="1">
    <citation type="journal article" date="1992" name="J. Bacteriol.">
        <title>Cloning, expression, and characterization of the Micromonospora viridifaciens neuraminidase gene in Streptomyces lividans.</title>
        <authorList>
            <person name="Sakurada K."/>
            <person name="Ohta T."/>
            <person name="Hasegawa M."/>
        </authorList>
    </citation>
    <scope>NUCLEOTIDE SEQUENCE [GENOMIC DNA]</scope>
    <source>
        <strain>ATCC 31146 / DSM 43909 / BCRC 13409 / JCM 3267 / NBRC 101887 / FD 23988</strain>
    </source>
</reference>
<feature type="chain" id="PRO_0000096776" description="Putative transcriptional regulatory protein NedR">
    <location>
        <begin position="1"/>
        <end position="138"/>
    </location>
</feature>
<feature type="region of interest" description="Disordered" evidence="1">
    <location>
        <begin position="1"/>
        <end position="25"/>
    </location>
</feature>
<feature type="compositionally biased region" description="Polar residues" evidence="1">
    <location>
        <begin position="9"/>
        <end position="25"/>
    </location>
</feature>
<sequence length="138" mass="15277">MCWGRSWTFGRSSSKGWRPTSSASSYDEHRADLSTLADEMVDLASQGRDGLEVDRAFHLKLMEPLGNDLILQLTEAFWQVQAIVAPTLRTEPEDRLITAQRHRAIVDAATAGDPEALRSAIADHYAPIRTSIARAVQS</sequence>
<accession>Q02835</accession>
<keyword id="KW-0238">DNA-binding</keyword>
<keyword id="KW-0804">Transcription</keyword>
<keyword id="KW-0805">Transcription regulation</keyword>
<name>NEDR_MICVI</name>
<dbReference type="EMBL" id="D01045">
    <property type="protein sequence ID" value="BAA00851.1"/>
    <property type="molecule type" value="Genomic_DNA"/>
</dbReference>
<dbReference type="PIR" id="B45244">
    <property type="entry name" value="B45244"/>
</dbReference>
<dbReference type="SMR" id="Q02835"/>
<dbReference type="GO" id="GO:0003677">
    <property type="term" value="F:DNA binding"/>
    <property type="evidence" value="ECO:0007669"/>
    <property type="project" value="UniProtKB-KW"/>
</dbReference>
<dbReference type="Gene3D" id="1.20.120.530">
    <property type="entry name" value="GntR ligand-binding domain-like"/>
    <property type="match status" value="1"/>
</dbReference>
<dbReference type="InterPro" id="IPR011711">
    <property type="entry name" value="GntR_C"/>
</dbReference>
<dbReference type="InterPro" id="IPR008920">
    <property type="entry name" value="TF_FadR/GntR_C"/>
</dbReference>
<dbReference type="Pfam" id="PF07729">
    <property type="entry name" value="FCD"/>
    <property type="match status" value="1"/>
</dbReference>
<dbReference type="SUPFAM" id="SSF48008">
    <property type="entry name" value="GntR ligand-binding domain-like"/>
    <property type="match status" value="1"/>
</dbReference>